<comment type="function">
    <text evidence="5 6 7 8 9">Probable non-functional open reading frame (ORF) of V region of the variable domain of immunoglobulin light chains (PubMed:24600447). Non-functional ORF generally cannot participate in the synthesis of a productive immunoglobulin chain due to altered V-(D)-J or switch recombination and/or splicing site (at mRNA level) and/or conserved amino acid change (protein level) (PubMed:9619395). Immunoglobulins, also known as antibodies, are membrane-bound or secreted glycoproteins produced by B lymphocytes. In the recognition phase of humoral immunity, the membrane-bound immunoglobulins serve as receptors which, upon binding of a specific antigen, trigger the clonal expansion and differentiation of B lymphocytes into immunoglobulins-secreting plasma cells. Secreted immunoglobulins mediate the effector phase of humoral immunity, which results in the elimination of bound antigens (PubMed:20176268, PubMed:22158414). The antigen binding site is formed by the variable domain of one heavy chain, together with that of its associated light chain. Thus, each immunoglobulin has two antigen binding sites with remarkable affinity for a particular antigen. The variable domains are assembled by a process called V-(D)-J rearrangement and can then be subjected to somatic hypermutations which, after exposure to antigen and selection, allow affinity maturation for a particular antigen (PubMed:17576170, PubMed:20176268).</text>
</comment>
<comment type="subunit">
    <text evidence="6">Immunoglobulins are composed of two identical heavy chains and two identical light chains; disulfide-linked.</text>
</comment>
<comment type="subcellular location">
    <subcellularLocation>
        <location evidence="6 7">Secreted</location>
    </subcellularLocation>
    <subcellularLocation>
        <location evidence="6 7">Cell membrane</location>
    </subcellularLocation>
</comment>
<comment type="polymorphism">
    <text evidence="11">There are several alleles. The sequence shown is that of IMGT allele IGKV3-7*04.</text>
</comment>
<comment type="caution">
    <text evidence="9 11">Most probably a non-functional protein that cannot participate in the synthesis of a productive immunoglobulin chain due to an altered splicing site (PubMed:9619395).</text>
</comment>
<accession>A0A075B6H7</accession>
<proteinExistence type="evidence at protein level"/>
<evidence type="ECO:0000250" key="1">
    <source>
        <dbReference type="UniProtKB" id="P01602"/>
    </source>
</evidence>
<evidence type="ECO:0000255" key="2"/>
<evidence type="ECO:0000255" key="3">
    <source>
        <dbReference type="PROSITE-ProRule" id="PRU00114"/>
    </source>
</evidence>
<evidence type="ECO:0000303" key="4">
    <source>
    </source>
</evidence>
<evidence type="ECO:0000303" key="5">
    <source>
    </source>
</evidence>
<evidence type="ECO:0000303" key="6">
    <source>
    </source>
</evidence>
<evidence type="ECO:0000303" key="7">
    <source>
    </source>
</evidence>
<evidence type="ECO:0000303" key="8">
    <source>
    </source>
</evidence>
<evidence type="ECO:0000303" key="9">
    <source>
    </source>
</evidence>
<evidence type="ECO:0000303" key="10">
    <source ref="4"/>
</evidence>
<evidence type="ECO:0000305" key="11"/>
<evidence type="ECO:0000312" key="12">
    <source>
        <dbReference type="HGNC" id="HGNC:5821"/>
    </source>
</evidence>
<keyword id="KW-1064">Adaptive immunity</keyword>
<keyword id="KW-1003">Cell membrane</keyword>
<keyword id="KW-1015">Disulfide bond</keyword>
<keyword id="KW-0391">Immunity</keyword>
<keyword id="KW-1280">Immunoglobulin</keyword>
<keyword id="KW-0393">Immunoglobulin domain</keyword>
<keyword id="KW-0472">Membrane</keyword>
<keyword id="KW-1267">Proteomics identification</keyword>
<keyword id="KW-1185">Reference proteome</keyword>
<keyword id="KW-0964">Secreted</keyword>
<keyword id="KW-0732">Signal</keyword>
<dbReference type="EMBL" id="AC245015">
    <property type="status" value="NOT_ANNOTATED_CDS"/>
    <property type="molecule type" value="Genomic_DNA"/>
</dbReference>
<dbReference type="SMR" id="A0A075B6H7"/>
<dbReference type="FunCoup" id="A0A075B6H7">
    <property type="interactions" value="280"/>
</dbReference>
<dbReference type="BioMuta" id="IGKV3-7"/>
<dbReference type="jPOST" id="A0A075B6H7"/>
<dbReference type="MassIVE" id="A0A075B6H7"/>
<dbReference type="Ensembl" id="ENST00000390247.2">
    <property type="protein sequence ID" value="ENSP00000374782.2"/>
    <property type="gene ID" value="ENSG00000243063.1"/>
</dbReference>
<dbReference type="Ensembl" id="ENST00000633250.1">
    <property type="protein sequence ID" value="ENSP00000487957.1"/>
    <property type="gene ID" value="ENSG00000282310.1"/>
</dbReference>
<dbReference type="UCSC" id="uc061lqm.1">
    <property type="organism name" value="human"/>
</dbReference>
<dbReference type="AGR" id="HGNC:5821"/>
<dbReference type="GeneCards" id="IGKV3-7"/>
<dbReference type="HGNC" id="HGNC:5821">
    <property type="gene designation" value="IGKV3-7"/>
</dbReference>
<dbReference type="HPA" id="ENSG00000243063">
    <property type="expression patterns" value="Tissue enhanced (intestine, lymphoid tissue, salivary gland)"/>
</dbReference>
<dbReference type="neXtProt" id="NX_A0A075B6H7"/>
<dbReference type="VEuPathDB" id="HostDB:ENSG00000243063"/>
<dbReference type="GeneTree" id="ENSGT00940000154413"/>
<dbReference type="HOGENOM" id="CLU_077975_4_1_1"/>
<dbReference type="InParanoid" id="A0A075B6H7"/>
<dbReference type="OMA" id="FANVEYW"/>
<dbReference type="PAN-GO" id="A0A075B6H7">
    <property type="GO annotations" value="3 GO annotations based on evolutionary models"/>
</dbReference>
<dbReference type="PhylomeDB" id="A0A075B6H7"/>
<dbReference type="SignaLink" id="A0A075B6H7"/>
<dbReference type="ChiTaRS" id="IGKV3-7">
    <property type="organism name" value="human"/>
</dbReference>
<dbReference type="PRO" id="PR:A0A075B6H7"/>
<dbReference type="Proteomes" id="UP000005640">
    <property type="component" value="Chromosome 2"/>
</dbReference>
<dbReference type="RNAct" id="A0A075B6H7">
    <property type="molecule type" value="protein"/>
</dbReference>
<dbReference type="Bgee" id="ENSG00000243063">
    <property type="expression patterns" value="Expressed in vermiform appendix and 73 other cell types or tissues"/>
</dbReference>
<dbReference type="GO" id="GO:0005576">
    <property type="term" value="C:extracellular region"/>
    <property type="evidence" value="ECO:0007669"/>
    <property type="project" value="UniProtKB-SubCell"/>
</dbReference>
<dbReference type="GO" id="GO:0019814">
    <property type="term" value="C:immunoglobulin complex"/>
    <property type="evidence" value="ECO:0000318"/>
    <property type="project" value="GO_Central"/>
</dbReference>
<dbReference type="GO" id="GO:0005886">
    <property type="term" value="C:plasma membrane"/>
    <property type="evidence" value="ECO:0007669"/>
    <property type="project" value="UniProtKB-SubCell"/>
</dbReference>
<dbReference type="GO" id="GO:0002250">
    <property type="term" value="P:adaptive immune response"/>
    <property type="evidence" value="ECO:0007669"/>
    <property type="project" value="UniProtKB-KW"/>
</dbReference>
<dbReference type="GO" id="GO:0006955">
    <property type="term" value="P:immune response"/>
    <property type="evidence" value="ECO:0000318"/>
    <property type="project" value="GO_Central"/>
</dbReference>
<dbReference type="CDD" id="cd04980">
    <property type="entry name" value="IgV_L_kappa"/>
    <property type="match status" value="1"/>
</dbReference>
<dbReference type="FunFam" id="2.60.40.10:FF:000350">
    <property type="entry name" value="Immunoglobulin kappa chain variable 18-36"/>
    <property type="match status" value="1"/>
</dbReference>
<dbReference type="Gene3D" id="2.60.40.10">
    <property type="entry name" value="Immunoglobulins"/>
    <property type="match status" value="1"/>
</dbReference>
<dbReference type="InterPro" id="IPR007110">
    <property type="entry name" value="Ig-like_dom"/>
</dbReference>
<dbReference type="InterPro" id="IPR036179">
    <property type="entry name" value="Ig-like_dom_sf"/>
</dbReference>
<dbReference type="InterPro" id="IPR013783">
    <property type="entry name" value="Ig-like_fold"/>
</dbReference>
<dbReference type="InterPro" id="IPR003599">
    <property type="entry name" value="Ig_sub"/>
</dbReference>
<dbReference type="InterPro" id="IPR013106">
    <property type="entry name" value="Ig_V-set"/>
</dbReference>
<dbReference type="InterPro" id="IPR050150">
    <property type="entry name" value="IgV_Light_Chain"/>
</dbReference>
<dbReference type="PANTHER" id="PTHR23267">
    <property type="entry name" value="IMMUNOGLOBULIN LIGHT CHAIN"/>
    <property type="match status" value="1"/>
</dbReference>
<dbReference type="Pfam" id="PF07686">
    <property type="entry name" value="V-set"/>
    <property type="match status" value="1"/>
</dbReference>
<dbReference type="SMART" id="SM00409">
    <property type="entry name" value="IG"/>
    <property type="match status" value="1"/>
</dbReference>
<dbReference type="SMART" id="SM00406">
    <property type="entry name" value="IGv"/>
    <property type="match status" value="1"/>
</dbReference>
<dbReference type="SUPFAM" id="SSF48726">
    <property type="entry name" value="Immunoglobulin"/>
    <property type="match status" value="1"/>
</dbReference>
<dbReference type="PROSITE" id="PS50835">
    <property type="entry name" value="IG_LIKE"/>
    <property type="match status" value="1"/>
</dbReference>
<name>KV37_HUMAN</name>
<protein>
    <recommendedName>
        <fullName evidence="11">Probable non-functional immunoglobulin kappa variable 3-7</fullName>
    </recommendedName>
</protein>
<gene>
    <name evidence="4 10 12" type="primary">IGKV3-7</name>
</gene>
<sequence length="116" mass="12783">MEAPAQLLFLLLLWLPDTTREIVMTQSPPTLSLSPGERVTLSCRASQSVSSSYLTWYQQKPGQAPRLLIYGASTRATSIPARFSGSGSGTDFTLTISSLQPEDFAVYYCQQDYNLP</sequence>
<feature type="signal peptide" evidence="2">
    <location>
        <begin position="1"/>
        <end position="21"/>
    </location>
</feature>
<feature type="chain" id="PRO_5001705903" description="Probable non-functional immunoglobulin kappa variable 3-7" evidence="2">
    <location>
        <begin position="22"/>
        <end position="116"/>
    </location>
</feature>
<feature type="domain" description="Ig-like" evidence="3">
    <location>
        <begin position="22"/>
        <end position="116" status="greater than"/>
    </location>
</feature>
<feature type="region of interest" description="Framework-1" evidence="1">
    <location>
        <begin position="21"/>
        <end position="43"/>
    </location>
</feature>
<feature type="region of interest" description="Complementarity-determining-1" evidence="1">
    <location>
        <begin position="44"/>
        <end position="55"/>
    </location>
</feature>
<feature type="region of interest" description="Framework-2" evidence="1">
    <location>
        <begin position="56"/>
        <end position="70"/>
    </location>
</feature>
<feature type="region of interest" description="Complementarity-determining-2" evidence="1">
    <location>
        <begin position="71"/>
        <end position="77"/>
    </location>
</feature>
<feature type="region of interest" description="Framework-3" evidence="1">
    <location>
        <begin position="78"/>
        <end position="109"/>
    </location>
</feature>
<feature type="region of interest" description="Complementarity-determining-3" evidence="1">
    <location>
        <begin position="110"/>
        <end position="116" status="greater than"/>
    </location>
</feature>
<feature type="disulfide bond" evidence="3">
    <location>
        <begin position="43"/>
        <end position="109"/>
    </location>
</feature>
<feature type="non-terminal residue">
    <location>
        <position position="116"/>
    </location>
</feature>
<organism>
    <name type="scientific">Homo sapiens</name>
    <name type="common">Human</name>
    <dbReference type="NCBI Taxonomy" id="9606"/>
    <lineage>
        <taxon>Eukaryota</taxon>
        <taxon>Metazoa</taxon>
        <taxon>Chordata</taxon>
        <taxon>Craniata</taxon>
        <taxon>Vertebrata</taxon>
        <taxon>Euteleostomi</taxon>
        <taxon>Mammalia</taxon>
        <taxon>Eutheria</taxon>
        <taxon>Euarchontoglires</taxon>
        <taxon>Primates</taxon>
        <taxon>Haplorrhini</taxon>
        <taxon>Catarrhini</taxon>
        <taxon>Hominidae</taxon>
        <taxon>Homo</taxon>
    </lineage>
</organism>
<reference key="1">
    <citation type="journal article" date="2005" name="Nature">
        <title>Generation and annotation of the DNA sequences of human chromosomes 2 and 4.</title>
        <authorList>
            <person name="Hillier L.W."/>
            <person name="Graves T.A."/>
            <person name="Fulton R.S."/>
            <person name="Fulton L.A."/>
            <person name="Pepin K.H."/>
            <person name="Minx P."/>
            <person name="Wagner-McPherson C."/>
            <person name="Layman D."/>
            <person name="Wylie K."/>
            <person name="Sekhon M."/>
            <person name="Becker M.C."/>
            <person name="Fewell G.A."/>
            <person name="Delehaunty K.D."/>
            <person name="Miner T.L."/>
            <person name="Nash W.E."/>
            <person name="Kremitzki C."/>
            <person name="Oddy L."/>
            <person name="Du H."/>
            <person name="Sun H."/>
            <person name="Bradshaw-Cordum H."/>
            <person name="Ali J."/>
            <person name="Carter J."/>
            <person name="Cordes M."/>
            <person name="Harris A."/>
            <person name="Isak A."/>
            <person name="van Brunt A."/>
            <person name="Nguyen C."/>
            <person name="Du F."/>
            <person name="Courtney L."/>
            <person name="Kalicki J."/>
            <person name="Ozersky P."/>
            <person name="Abbott S."/>
            <person name="Armstrong J."/>
            <person name="Belter E.A."/>
            <person name="Caruso L."/>
            <person name="Cedroni M."/>
            <person name="Cotton M."/>
            <person name="Davidson T."/>
            <person name="Desai A."/>
            <person name="Elliott G."/>
            <person name="Erb T."/>
            <person name="Fronick C."/>
            <person name="Gaige T."/>
            <person name="Haakenson W."/>
            <person name="Haglund K."/>
            <person name="Holmes A."/>
            <person name="Harkins R."/>
            <person name="Kim K."/>
            <person name="Kruchowski S.S."/>
            <person name="Strong C.M."/>
            <person name="Grewal N."/>
            <person name="Goyea E."/>
            <person name="Hou S."/>
            <person name="Levy A."/>
            <person name="Martinka S."/>
            <person name="Mead K."/>
            <person name="McLellan M.D."/>
            <person name="Meyer R."/>
            <person name="Randall-Maher J."/>
            <person name="Tomlinson C."/>
            <person name="Dauphin-Kohlberg S."/>
            <person name="Kozlowicz-Reilly A."/>
            <person name="Shah N."/>
            <person name="Swearengen-Shahid S."/>
            <person name="Snider J."/>
            <person name="Strong J.T."/>
            <person name="Thompson J."/>
            <person name="Yoakum M."/>
            <person name="Leonard S."/>
            <person name="Pearman C."/>
            <person name="Trani L."/>
            <person name="Radionenko M."/>
            <person name="Waligorski J.E."/>
            <person name="Wang C."/>
            <person name="Rock S.M."/>
            <person name="Tin-Wollam A.-M."/>
            <person name="Maupin R."/>
            <person name="Latreille P."/>
            <person name="Wendl M.C."/>
            <person name="Yang S.-P."/>
            <person name="Pohl C."/>
            <person name="Wallis J.W."/>
            <person name="Spieth J."/>
            <person name="Bieri T.A."/>
            <person name="Berkowicz N."/>
            <person name="Nelson J.O."/>
            <person name="Osborne J."/>
            <person name="Ding L."/>
            <person name="Meyer R."/>
            <person name="Sabo A."/>
            <person name="Shotland Y."/>
            <person name="Sinha P."/>
            <person name="Wohldmann P.E."/>
            <person name="Cook L.L."/>
            <person name="Hickenbotham M.T."/>
            <person name="Eldred J."/>
            <person name="Williams D."/>
            <person name="Jones T.A."/>
            <person name="She X."/>
            <person name="Ciccarelli F.D."/>
            <person name="Izaurralde E."/>
            <person name="Taylor J."/>
            <person name="Schmutz J."/>
            <person name="Myers R.M."/>
            <person name="Cox D.R."/>
            <person name="Huang X."/>
            <person name="McPherson J.D."/>
            <person name="Mardis E.R."/>
            <person name="Clifton S.W."/>
            <person name="Warren W.C."/>
            <person name="Chinwalla A.T."/>
            <person name="Eddy S.R."/>
            <person name="Marra M.A."/>
            <person name="Ovcharenko I."/>
            <person name="Furey T.S."/>
            <person name="Miller W."/>
            <person name="Eichler E.E."/>
            <person name="Bork P."/>
            <person name="Suyama M."/>
            <person name="Torrents D."/>
            <person name="Waterston R.H."/>
            <person name="Wilson R.K."/>
        </authorList>
    </citation>
    <scope>NUCLEOTIDE SEQUENCE [LARGE SCALE GENOMIC DNA] (IMGT ALLELE IGKV3-7*04)</scope>
</reference>
<reference key="2">
    <citation type="journal article" date="1998" name="Exp. Clin. Immunogenet.">
        <title>IMGT (ImMunoGeneTics) locus on focus. A new section of Experimental and Clinical Immunogenetics.</title>
        <authorList>
            <person name="Lefranc M.P."/>
        </authorList>
    </citation>
    <scope>CHARACTERIZATION</scope>
</reference>
<reference key="3">
    <citation type="journal article" date="2001" name="Exp. Clin. Immunogenet.">
        <title>Nomenclature of the human immunoglobulin heavy (IGH) genes.</title>
        <authorList>
            <person name="Lefranc M.P."/>
        </authorList>
    </citation>
    <scope>NOMENCLATURE</scope>
</reference>
<reference key="4">
    <citation type="book" date="2001" name="The Immunoglobulin FactsBook.">
        <title>The Immunoglobulin FactsBook.</title>
        <editorList>
            <person name="Lefranc M.P."/>
            <person name="Lefranc G."/>
        </editorList>
        <authorList>
            <person name="Lefranc M.P."/>
            <person name="Lefranc G."/>
        </authorList>
    </citation>
    <scope>NOMENCLATURE</scope>
</reference>
<reference key="5">
    <citation type="journal article" date="2007" name="Annu. Rev. Genet.">
        <title>Immunoglobulin somatic hypermutation.</title>
        <authorList>
            <person name="Teng G."/>
            <person name="Papavasiliou F.N."/>
        </authorList>
    </citation>
    <scope>REVIEW ON SOMATIC HYPERMUTATION</scope>
</reference>
<reference key="6">
    <citation type="journal article" date="2010" name="J. Allergy Clin. Immunol.">
        <title>Structure and function of immunoglobulins.</title>
        <authorList>
            <person name="Schroeder H.W. Jr."/>
            <person name="Cavacini L."/>
        </authorList>
    </citation>
    <scope>REVIEW ON IMMUNOGLOBULINS</scope>
</reference>
<reference key="7">
    <citation type="journal article" date="2012" name="Nat. Rev. Immunol.">
        <title>Molecular programming of B cell memory.</title>
        <authorList>
            <person name="McHeyzer-Williams M."/>
            <person name="Okitsu S."/>
            <person name="Wang N."/>
            <person name="McHeyzer-Williams L."/>
        </authorList>
    </citation>
    <scope>REVIEW ON FUNCTION</scope>
</reference>
<reference key="8">
    <citation type="journal article" date="2014" name="Front. Immunol.">
        <title>Immunoglobulin and T Cell Receptor Genes: IMGT((R)) and the Birth and Rise of Immunoinformatics.</title>
        <authorList>
            <person name="Lefranc M.P."/>
        </authorList>
    </citation>
    <scope>NOMENCLATURE</scope>
</reference>